<keyword id="KW-0067">ATP-binding</keyword>
<keyword id="KW-0963">Cytoplasm</keyword>
<keyword id="KW-0210">Decarboxylase</keyword>
<keyword id="KW-0312">Gluconeogenesis</keyword>
<keyword id="KW-0456">Lyase</keyword>
<keyword id="KW-0464">Manganese</keyword>
<keyword id="KW-0479">Metal-binding</keyword>
<keyword id="KW-0547">Nucleotide-binding</keyword>
<organism>
    <name type="scientific">Yersinia enterocolitica serotype O:8 / biotype 1B (strain NCTC 13174 / 8081)</name>
    <dbReference type="NCBI Taxonomy" id="393305"/>
    <lineage>
        <taxon>Bacteria</taxon>
        <taxon>Pseudomonadati</taxon>
        <taxon>Pseudomonadota</taxon>
        <taxon>Gammaproteobacteria</taxon>
        <taxon>Enterobacterales</taxon>
        <taxon>Yersiniaceae</taxon>
        <taxon>Yersinia</taxon>
    </lineage>
</organism>
<proteinExistence type="inferred from homology"/>
<sequence length="539" mass="59297">MSVKGITPQELAAYGIHNVSEIVYNPSYDLLFQEETKPTLEGYERGTLTNTGAIAVDTGIFTGRSPKDKYIVRDAITQDTVWWADQGKGKNDNKPLSQETWTHLKGLVTNQLSGKRLFVVDTFCGANADTRLQVRFVTEVAWQAHFVKNMFIRPTDEELAHFEPDFIVMNGAKCINPNWKEQGLNSENFVAFNLTERMQLIGGTWYGGEMKKGMFSMMNYLLPLKGIASMHCSANVGEKGDVAIFFGLSGTGKTTLSTDPKRKLIGDDEHGWDDDGVFNFEGGCYAKTIKLSEEAEPDIYHAIKRDALLENVVVLPDGTVDFNDGSKTENTRVSYPIYHIENIVKPVSKAGHATKVIFLTADAFGVLPPVSRLTANQTQYHFLSGFTAKLAGTERGVTEPTPTFSACFGAAFLSLHPTQYAEVLVKRMQAVGAQAYLVNTGWNGTGKRISIKDTRAIIDAILNGEIDKAETFTLPIFDLAVPMALPGVDPAILDPRDTYADVAQWQEKAEDLAKRFTTNFDKYTDTPAGAALVSAGPKI</sequence>
<feature type="chain" id="PRO_1000026364" description="Phosphoenolpyruvate carboxykinase (ATP)">
    <location>
        <begin position="1"/>
        <end position="539"/>
    </location>
</feature>
<feature type="binding site" evidence="1">
    <location>
        <position position="64"/>
    </location>
    <ligand>
        <name>substrate</name>
    </ligand>
</feature>
<feature type="binding site" evidence="1">
    <location>
        <position position="206"/>
    </location>
    <ligand>
        <name>substrate</name>
    </ligand>
</feature>
<feature type="binding site" evidence="1">
    <location>
        <position position="212"/>
    </location>
    <ligand>
        <name>ATP</name>
        <dbReference type="ChEBI" id="CHEBI:30616"/>
    </ligand>
</feature>
<feature type="binding site" evidence="1">
    <location>
        <position position="212"/>
    </location>
    <ligand>
        <name>Mn(2+)</name>
        <dbReference type="ChEBI" id="CHEBI:29035"/>
    </ligand>
</feature>
<feature type="binding site" evidence="1">
    <location>
        <position position="212"/>
    </location>
    <ligand>
        <name>substrate</name>
    </ligand>
</feature>
<feature type="binding site" evidence="1">
    <location>
        <position position="231"/>
    </location>
    <ligand>
        <name>ATP</name>
        <dbReference type="ChEBI" id="CHEBI:30616"/>
    </ligand>
</feature>
<feature type="binding site" evidence="1">
    <location>
        <position position="231"/>
    </location>
    <ligand>
        <name>Mn(2+)</name>
        <dbReference type="ChEBI" id="CHEBI:29035"/>
    </ligand>
</feature>
<feature type="binding site" evidence="1">
    <location>
        <begin position="247"/>
        <end position="255"/>
    </location>
    <ligand>
        <name>ATP</name>
        <dbReference type="ChEBI" id="CHEBI:30616"/>
    </ligand>
</feature>
<feature type="binding site" evidence="1">
    <location>
        <position position="268"/>
    </location>
    <ligand>
        <name>Mn(2+)</name>
        <dbReference type="ChEBI" id="CHEBI:29035"/>
    </ligand>
</feature>
<feature type="binding site" evidence="1">
    <location>
        <position position="296"/>
    </location>
    <ligand>
        <name>ATP</name>
        <dbReference type="ChEBI" id="CHEBI:30616"/>
    </ligand>
</feature>
<feature type="binding site" evidence="1">
    <location>
        <position position="332"/>
    </location>
    <ligand>
        <name>ATP</name>
        <dbReference type="ChEBI" id="CHEBI:30616"/>
    </ligand>
</feature>
<feature type="binding site" evidence="1">
    <location>
        <position position="332"/>
    </location>
    <ligand>
        <name>substrate</name>
    </ligand>
</feature>
<feature type="binding site" evidence="1">
    <location>
        <begin position="448"/>
        <end position="449"/>
    </location>
    <ligand>
        <name>ATP</name>
        <dbReference type="ChEBI" id="CHEBI:30616"/>
    </ligand>
</feature>
<feature type="binding site" evidence="1">
    <location>
        <position position="454"/>
    </location>
    <ligand>
        <name>ATP</name>
        <dbReference type="ChEBI" id="CHEBI:30616"/>
    </ligand>
</feature>
<protein>
    <recommendedName>
        <fullName evidence="1">Phosphoenolpyruvate carboxykinase (ATP)</fullName>
        <shortName evidence="1">PCK</shortName>
        <shortName evidence="1">PEP carboxykinase</shortName>
        <shortName evidence="1">PEPCK</shortName>
        <ecNumber evidence="1">4.1.1.49</ecNumber>
    </recommendedName>
</protein>
<accession>A1JSE7</accession>
<comment type="function">
    <text evidence="1">Involved in the gluconeogenesis. Catalyzes the conversion of oxaloacetate (OAA) to phosphoenolpyruvate (PEP) through direct phosphoryl transfer between the nucleoside triphosphate and OAA.</text>
</comment>
<comment type="catalytic activity">
    <reaction evidence="1">
        <text>oxaloacetate + ATP = phosphoenolpyruvate + ADP + CO2</text>
        <dbReference type="Rhea" id="RHEA:18617"/>
        <dbReference type="ChEBI" id="CHEBI:16452"/>
        <dbReference type="ChEBI" id="CHEBI:16526"/>
        <dbReference type="ChEBI" id="CHEBI:30616"/>
        <dbReference type="ChEBI" id="CHEBI:58702"/>
        <dbReference type="ChEBI" id="CHEBI:456216"/>
        <dbReference type="EC" id="4.1.1.49"/>
    </reaction>
</comment>
<comment type="cofactor">
    <cofactor evidence="1">
        <name>Mn(2+)</name>
        <dbReference type="ChEBI" id="CHEBI:29035"/>
    </cofactor>
    <text evidence="1">Binds 1 Mn(2+) ion per subunit.</text>
</comment>
<comment type="pathway">
    <text evidence="1">Carbohydrate biosynthesis; gluconeogenesis.</text>
</comment>
<comment type="subunit">
    <text evidence="1">Monomer.</text>
</comment>
<comment type="subcellular location">
    <subcellularLocation>
        <location evidence="1">Cytoplasm</location>
    </subcellularLocation>
</comment>
<comment type="similarity">
    <text evidence="1">Belongs to the phosphoenolpyruvate carboxykinase (ATP) family.</text>
</comment>
<gene>
    <name evidence="1" type="primary">pckA</name>
    <name type="ordered locus">YE3986</name>
</gene>
<evidence type="ECO:0000255" key="1">
    <source>
        <dbReference type="HAMAP-Rule" id="MF_00453"/>
    </source>
</evidence>
<name>PCKA_YERE8</name>
<reference key="1">
    <citation type="journal article" date="2006" name="PLoS Genet.">
        <title>The complete genome sequence and comparative genome analysis of the high pathogenicity Yersinia enterocolitica strain 8081.</title>
        <authorList>
            <person name="Thomson N.R."/>
            <person name="Howard S."/>
            <person name="Wren B.W."/>
            <person name="Holden M.T.G."/>
            <person name="Crossman L."/>
            <person name="Challis G.L."/>
            <person name="Churcher C."/>
            <person name="Mungall K."/>
            <person name="Brooks K."/>
            <person name="Chillingworth T."/>
            <person name="Feltwell T."/>
            <person name="Abdellah Z."/>
            <person name="Hauser H."/>
            <person name="Jagels K."/>
            <person name="Maddison M."/>
            <person name="Moule S."/>
            <person name="Sanders M."/>
            <person name="Whitehead S."/>
            <person name="Quail M.A."/>
            <person name="Dougan G."/>
            <person name="Parkhill J."/>
            <person name="Prentice M.B."/>
        </authorList>
    </citation>
    <scope>NUCLEOTIDE SEQUENCE [LARGE SCALE GENOMIC DNA]</scope>
    <source>
        <strain>NCTC 13174 / 8081</strain>
    </source>
</reference>
<dbReference type="EC" id="4.1.1.49" evidence="1"/>
<dbReference type="EMBL" id="AM286415">
    <property type="protein sequence ID" value="CAL14006.1"/>
    <property type="molecule type" value="Genomic_DNA"/>
</dbReference>
<dbReference type="RefSeq" id="WP_011817354.1">
    <property type="nucleotide sequence ID" value="NC_008800.1"/>
</dbReference>
<dbReference type="RefSeq" id="YP_001008132.1">
    <property type="nucleotide sequence ID" value="NC_008800.1"/>
</dbReference>
<dbReference type="SMR" id="A1JSE7"/>
<dbReference type="KEGG" id="yen:YE3986"/>
<dbReference type="PATRIC" id="fig|393305.7.peg.4243"/>
<dbReference type="eggNOG" id="COG1866">
    <property type="taxonomic scope" value="Bacteria"/>
</dbReference>
<dbReference type="HOGENOM" id="CLU_018247_0_1_6"/>
<dbReference type="OrthoDB" id="9806325at2"/>
<dbReference type="UniPathway" id="UPA00138"/>
<dbReference type="Proteomes" id="UP000000642">
    <property type="component" value="Chromosome"/>
</dbReference>
<dbReference type="GO" id="GO:0005829">
    <property type="term" value="C:cytosol"/>
    <property type="evidence" value="ECO:0007669"/>
    <property type="project" value="TreeGrafter"/>
</dbReference>
<dbReference type="GO" id="GO:0005524">
    <property type="term" value="F:ATP binding"/>
    <property type="evidence" value="ECO:0007669"/>
    <property type="project" value="UniProtKB-UniRule"/>
</dbReference>
<dbReference type="GO" id="GO:0046872">
    <property type="term" value="F:metal ion binding"/>
    <property type="evidence" value="ECO:0007669"/>
    <property type="project" value="UniProtKB-KW"/>
</dbReference>
<dbReference type="GO" id="GO:0004612">
    <property type="term" value="F:phosphoenolpyruvate carboxykinase (ATP) activity"/>
    <property type="evidence" value="ECO:0007669"/>
    <property type="project" value="UniProtKB-UniRule"/>
</dbReference>
<dbReference type="GO" id="GO:0006094">
    <property type="term" value="P:gluconeogenesis"/>
    <property type="evidence" value="ECO:0007669"/>
    <property type="project" value="UniProtKB-UniRule"/>
</dbReference>
<dbReference type="CDD" id="cd00484">
    <property type="entry name" value="PEPCK_ATP"/>
    <property type="match status" value="1"/>
</dbReference>
<dbReference type="FunFam" id="2.170.8.10:FF:000001">
    <property type="entry name" value="Phosphoenolpyruvate carboxykinase (ATP)"/>
    <property type="match status" value="1"/>
</dbReference>
<dbReference type="FunFam" id="3.40.449.10:FF:000001">
    <property type="entry name" value="Phosphoenolpyruvate carboxykinase (ATP)"/>
    <property type="match status" value="1"/>
</dbReference>
<dbReference type="Gene3D" id="3.90.228.20">
    <property type="match status" value="1"/>
</dbReference>
<dbReference type="Gene3D" id="3.40.449.10">
    <property type="entry name" value="Phosphoenolpyruvate Carboxykinase, domain 1"/>
    <property type="match status" value="1"/>
</dbReference>
<dbReference type="Gene3D" id="2.170.8.10">
    <property type="entry name" value="Phosphoenolpyruvate Carboxykinase, domain 2"/>
    <property type="match status" value="1"/>
</dbReference>
<dbReference type="HAMAP" id="MF_00453">
    <property type="entry name" value="PEPCK_ATP"/>
    <property type="match status" value="1"/>
</dbReference>
<dbReference type="InterPro" id="IPR001272">
    <property type="entry name" value="PEP_carboxykinase_ATP"/>
</dbReference>
<dbReference type="InterPro" id="IPR013035">
    <property type="entry name" value="PEP_carboxykinase_C"/>
</dbReference>
<dbReference type="InterPro" id="IPR008210">
    <property type="entry name" value="PEP_carboxykinase_N"/>
</dbReference>
<dbReference type="InterPro" id="IPR015994">
    <property type="entry name" value="PEPCK_ATP_CS"/>
</dbReference>
<dbReference type="NCBIfam" id="TIGR00224">
    <property type="entry name" value="pckA"/>
    <property type="match status" value="1"/>
</dbReference>
<dbReference type="NCBIfam" id="NF006819">
    <property type="entry name" value="PRK09344.1-1"/>
    <property type="match status" value="1"/>
</dbReference>
<dbReference type="NCBIfam" id="NF006820">
    <property type="entry name" value="PRK09344.1-2"/>
    <property type="match status" value="1"/>
</dbReference>
<dbReference type="NCBIfam" id="NF006821">
    <property type="entry name" value="PRK09344.1-3"/>
    <property type="match status" value="1"/>
</dbReference>
<dbReference type="PANTHER" id="PTHR30031:SF0">
    <property type="entry name" value="PHOSPHOENOLPYRUVATE CARBOXYKINASE (ATP)"/>
    <property type="match status" value="1"/>
</dbReference>
<dbReference type="PANTHER" id="PTHR30031">
    <property type="entry name" value="PHOSPHOENOLPYRUVATE CARBOXYKINASE ATP"/>
    <property type="match status" value="1"/>
</dbReference>
<dbReference type="Pfam" id="PF01293">
    <property type="entry name" value="PEPCK_ATP"/>
    <property type="match status" value="1"/>
</dbReference>
<dbReference type="PIRSF" id="PIRSF006294">
    <property type="entry name" value="PEP_crbxkin"/>
    <property type="match status" value="1"/>
</dbReference>
<dbReference type="SUPFAM" id="SSF68923">
    <property type="entry name" value="PEP carboxykinase N-terminal domain"/>
    <property type="match status" value="1"/>
</dbReference>
<dbReference type="SUPFAM" id="SSF53795">
    <property type="entry name" value="PEP carboxykinase-like"/>
    <property type="match status" value="1"/>
</dbReference>
<dbReference type="PROSITE" id="PS00532">
    <property type="entry name" value="PEPCK_ATP"/>
    <property type="match status" value="1"/>
</dbReference>